<geneLocation type="mitochondrion"/>
<keyword id="KW-0249">Electron transport</keyword>
<keyword id="KW-0349">Heme</keyword>
<keyword id="KW-0408">Iron</keyword>
<keyword id="KW-0472">Membrane</keyword>
<keyword id="KW-0479">Metal-binding</keyword>
<keyword id="KW-0496">Mitochondrion</keyword>
<keyword id="KW-0999">Mitochondrion inner membrane</keyword>
<keyword id="KW-0679">Respiratory chain</keyword>
<keyword id="KW-0812">Transmembrane</keyword>
<keyword id="KW-1133">Transmembrane helix</keyword>
<keyword id="KW-0813">Transport</keyword>
<keyword id="KW-0830">Ubiquinone</keyword>
<sequence>MAIMRKSHPLMKIVNHAFIDLPTPPNISGWWNFGSLLGLCLVLQILTGLFLAMHYTSDTLTAFSSVTHICRDVNYGWLIRYMHANGASLFFISLYIHIGRGIYYGSYLYTETWNIGILLLLLTMATAFVGYVLPWGQMSFWGATVITNLLSAIPYIGQDLVEWIWGGFSVDKATLTRFFAFHFILPLIITALAMVHLLFLHETGSNNPLGIPSDCGKVPFHPYYTTKDFLGVIMLLMQFLTLVLFFSDKLGDPDNYTPANPLNTPPHIKPEWYFLFAYAISRSIPNKLGGVVALLMSILVLALLPYLHTSKQRSLSFRPLSQTLFWVLVADLLLLTWIGGQPVEPPFIIIGQVASILYFLILLLLMPMAGLIENKLLKW</sequence>
<evidence type="ECO:0000250" key="1"/>
<evidence type="ECO:0000250" key="2">
    <source>
        <dbReference type="UniProtKB" id="P00157"/>
    </source>
</evidence>
<evidence type="ECO:0000255" key="3">
    <source>
        <dbReference type="PROSITE-ProRule" id="PRU00967"/>
    </source>
</evidence>
<evidence type="ECO:0000255" key="4">
    <source>
        <dbReference type="PROSITE-ProRule" id="PRU00968"/>
    </source>
</evidence>
<reference key="1">
    <citation type="journal article" date="2006" name="J. Mammal.">
        <title>Molecular systematics of pocket gophers of the genus Geomys.</title>
        <authorList>
            <person name="Sudman P.D."/>
            <person name="Wickliffe J.K."/>
            <person name="Horner P."/>
            <person name="Smolen M.J."/>
            <person name="Bickham J.W."/>
            <person name="Bradley R.D."/>
        </authorList>
    </citation>
    <scope>NUCLEOTIDE SEQUENCE [GENOMIC DNA]</scope>
</reference>
<name>CYB_GEOLU</name>
<feature type="chain" id="PRO_0000255057" description="Cytochrome b">
    <location>
        <begin position="1"/>
        <end position="379"/>
    </location>
</feature>
<feature type="transmembrane region" description="Helical" evidence="2">
    <location>
        <begin position="33"/>
        <end position="53"/>
    </location>
</feature>
<feature type="transmembrane region" description="Helical" evidence="2">
    <location>
        <begin position="77"/>
        <end position="98"/>
    </location>
</feature>
<feature type="transmembrane region" description="Helical" evidence="2">
    <location>
        <begin position="113"/>
        <end position="133"/>
    </location>
</feature>
<feature type="transmembrane region" description="Helical" evidence="2">
    <location>
        <begin position="178"/>
        <end position="198"/>
    </location>
</feature>
<feature type="transmembrane region" description="Helical" evidence="2">
    <location>
        <begin position="226"/>
        <end position="246"/>
    </location>
</feature>
<feature type="transmembrane region" description="Helical" evidence="2">
    <location>
        <begin position="288"/>
        <end position="308"/>
    </location>
</feature>
<feature type="transmembrane region" description="Helical" evidence="2">
    <location>
        <begin position="320"/>
        <end position="340"/>
    </location>
</feature>
<feature type="transmembrane region" description="Helical" evidence="2">
    <location>
        <begin position="347"/>
        <end position="367"/>
    </location>
</feature>
<feature type="binding site" description="axial binding residue" evidence="2">
    <location>
        <position position="83"/>
    </location>
    <ligand>
        <name>heme b</name>
        <dbReference type="ChEBI" id="CHEBI:60344"/>
        <label>b562</label>
    </ligand>
    <ligandPart>
        <name>Fe</name>
        <dbReference type="ChEBI" id="CHEBI:18248"/>
    </ligandPart>
</feature>
<feature type="binding site" description="axial binding residue" evidence="2">
    <location>
        <position position="97"/>
    </location>
    <ligand>
        <name>heme b</name>
        <dbReference type="ChEBI" id="CHEBI:60344"/>
        <label>b566</label>
    </ligand>
    <ligandPart>
        <name>Fe</name>
        <dbReference type="ChEBI" id="CHEBI:18248"/>
    </ligandPart>
</feature>
<feature type="binding site" description="axial binding residue" evidence="2">
    <location>
        <position position="182"/>
    </location>
    <ligand>
        <name>heme b</name>
        <dbReference type="ChEBI" id="CHEBI:60344"/>
        <label>b562</label>
    </ligand>
    <ligandPart>
        <name>Fe</name>
        <dbReference type="ChEBI" id="CHEBI:18248"/>
    </ligandPart>
</feature>
<feature type="binding site" description="axial binding residue" evidence="2">
    <location>
        <position position="196"/>
    </location>
    <ligand>
        <name>heme b</name>
        <dbReference type="ChEBI" id="CHEBI:60344"/>
        <label>b566</label>
    </ligand>
    <ligandPart>
        <name>Fe</name>
        <dbReference type="ChEBI" id="CHEBI:18248"/>
    </ligandPart>
</feature>
<feature type="binding site" evidence="2">
    <location>
        <position position="201"/>
    </location>
    <ligand>
        <name>a ubiquinone</name>
        <dbReference type="ChEBI" id="CHEBI:16389"/>
    </ligand>
</feature>
<accession>Q5YJ78</accession>
<dbReference type="EMBL" id="AY393950">
    <property type="protein sequence ID" value="AAR84523.1"/>
    <property type="molecule type" value="Genomic_DNA"/>
</dbReference>
<dbReference type="SMR" id="Q5YJ78"/>
<dbReference type="GO" id="GO:0005743">
    <property type="term" value="C:mitochondrial inner membrane"/>
    <property type="evidence" value="ECO:0007669"/>
    <property type="project" value="UniProtKB-SubCell"/>
</dbReference>
<dbReference type="GO" id="GO:0045275">
    <property type="term" value="C:respiratory chain complex III"/>
    <property type="evidence" value="ECO:0007669"/>
    <property type="project" value="InterPro"/>
</dbReference>
<dbReference type="GO" id="GO:0046872">
    <property type="term" value="F:metal ion binding"/>
    <property type="evidence" value="ECO:0007669"/>
    <property type="project" value="UniProtKB-KW"/>
</dbReference>
<dbReference type="GO" id="GO:0008121">
    <property type="term" value="F:ubiquinol-cytochrome-c reductase activity"/>
    <property type="evidence" value="ECO:0007669"/>
    <property type="project" value="InterPro"/>
</dbReference>
<dbReference type="GO" id="GO:0006122">
    <property type="term" value="P:mitochondrial electron transport, ubiquinol to cytochrome c"/>
    <property type="evidence" value="ECO:0007669"/>
    <property type="project" value="TreeGrafter"/>
</dbReference>
<dbReference type="CDD" id="cd00290">
    <property type="entry name" value="cytochrome_b_C"/>
    <property type="match status" value="1"/>
</dbReference>
<dbReference type="CDD" id="cd00284">
    <property type="entry name" value="Cytochrome_b_N"/>
    <property type="match status" value="1"/>
</dbReference>
<dbReference type="FunFam" id="1.20.810.10:FF:000002">
    <property type="entry name" value="Cytochrome b"/>
    <property type="match status" value="1"/>
</dbReference>
<dbReference type="Gene3D" id="1.20.810.10">
    <property type="entry name" value="Cytochrome Bc1 Complex, Chain C"/>
    <property type="match status" value="1"/>
</dbReference>
<dbReference type="InterPro" id="IPR005798">
    <property type="entry name" value="Cyt_b/b6_C"/>
</dbReference>
<dbReference type="InterPro" id="IPR036150">
    <property type="entry name" value="Cyt_b/b6_C_sf"/>
</dbReference>
<dbReference type="InterPro" id="IPR005797">
    <property type="entry name" value="Cyt_b/b6_N"/>
</dbReference>
<dbReference type="InterPro" id="IPR027387">
    <property type="entry name" value="Cytb/b6-like_sf"/>
</dbReference>
<dbReference type="InterPro" id="IPR030689">
    <property type="entry name" value="Cytochrome_b"/>
</dbReference>
<dbReference type="InterPro" id="IPR048260">
    <property type="entry name" value="Cytochrome_b_C_euk/bac"/>
</dbReference>
<dbReference type="InterPro" id="IPR048259">
    <property type="entry name" value="Cytochrome_b_N_euk/bac"/>
</dbReference>
<dbReference type="InterPro" id="IPR016174">
    <property type="entry name" value="Di-haem_cyt_TM"/>
</dbReference>
<dbReference type="PANTHER" id="PTHR19271">
    <property type="entry name" value="CYTOCHROME B"/>
    <property type="match status" value="1"/>
</dbReference>
<dbReference type="PANTHER" id="PTHR19271:SF16">
    <property type="entry name" value="CYTOCHROME B"/>
    <property type="match status" value="1"/>
</dbReference>
<dbReference type="Pfam" id="PF00032">
    <property type="entry name" value="Cytochrom_B_C"/>
    <property type="match status" value="1"/>
</dbReference>
<dbReference type="Pfam" id="PF00033">
    <property type="entry name" value="Cytochrome_B"/>
    <property type="match status" value="1"/>
</dbReference>
<dbReference type="PIRSF" id="PIRSF038885">
    <property type="entry name" value="COB"/>
    <property type="match status" value="1"/>
</dbReference>
<dbReference type="SUPFAM" id="SSF81648">
    <property type="entry name" value="a domain/subunit of cytochrome bc1 complex (Ubiquinol-cytochrome c reductase)"/>
    <property type="match status" value="1"/>
</dbReference>
<dbReference type="SUPFAM" id="SSF81342">
    <property type="entry name" value="Transmembrane di-heme cytochromes"/>
    <property type="match status" value="1"/>
</dbReference>
<dbReference type="PROSITE" id="PS51003">
    <property type="entry name" value="CYTB_CTER"/>
    <property type="match status" value="1"/>
</dbReference>
<dbReference type="PROSITE" id="PS51002">
    <property type="entry name" value="CYTB_NTER"/>
    <property type="match status" value="1"/>
</dbReference>
<organism>
    <name type="scientific">Geomys bursarius lutescens</name>
    <name type="common">Plains pocket gopher</name>
    <name type="synonym">Geomys lutescens</name>
    <dbReference type="NCBI Taxonomy" id="100209"/>
    <lineage>
        <taxon>Eukaryota</taxon>
        <taxon>Metazoa</taxon>
        <taxon>Chordata</taxon>
        <taxon>Craniata</taxon>
        <taxon>Vertebrata</taxon>
        <taxon>Euteleostomi</taxon>
        <taxon>Mammalia</taxon>
        <taxon>Eutheria</taxon>
        <taxon>Euarchontoglires</taxon>
        <taxon>Glires</taxon>
        <taxon>Rodentia</taxon>
        <taxon>Castorimorpha</taxon>
        <taxon>Geomyidae</taxon>
        <taxon>Geomys</taxon>
    </lineage>
</organism>
<protein>
    <recommendedName>
        <fullName>Cytochrome b</fullName>
    </recommendedName>
    <alternativeName>
        <fullName>Complex III subunit 3</fullName>
    </alternativeName>
    <alternativeName>
        <fullName>Complex III subunit III</fullName>
    </alternativeName>
    <alternativeName>
        <fullName>Cytochrome b-c1 complex subunit 3</fullName>
    </alternativeName>
    <alternativeName>
        <fullName>Ubiquinol-cytochrome-c reductase complex cytochrome b subunit</fullName>
    </alternativeName>
</protein>
<comment type="function">
    <text evidence="2">Component of the ubiquinol-cytochrome c reductase complex (complex III or cytochrome b-c1 complex) that is part of the mitochondrial respiratory chain. The b-c1 complex mediates electron transfer from ubiquinol to cytochrome c. Contributes to the generation of a proton gradient across the mitochondrial membrane that is then used for ATP synthesis.</text>
</comment>
<comment type="cofactor">
    <cofactor evidence="2">
        <name>heme b</name>
        <dbReference type="ChEBI" id="CHEBI:60344"/>
    </cofactor>
    <text evidence="2">Binds 2 heme b groups non-covalently.</text>
</comment>
<comment type="subunit">
    <text evidence="2">The cytochrome bc1 complex contains 11 subunits: 3 respiratory subunits (MT-CYB, CYC1 and UQCRFS1), 2 core proteins (UQCRC1 and UQCRC2) and 6 low-molecular weight proteins (UQCRH/QCR6, UQCRB/QCR7, UQCRQ/QCR8, UQCR10/QCR9, UQCR11/QCR10 and a cleavage product of UQCRFS1). This cytochrome bc1 complex then forms a dimer.</text>
</comment>
<comment type="subcellular location">
    <subcellularLocation>
        <location evidence="2">Mitochondrion inner membrane</location>
        <topology evidence="2">Multi-pass membrane protein</topology>
    </subcellularLocation>
</comment>
<comment type="miscellaneous">
    <text evidence="1">Heme 1 (or BL or b562) is low-potential and absorbs at about 562 nm, and heme 2 (or BH or b566) is high-potential and absorbs at about 566 nm.</text>
</comment>
<comment type="similarity">
    <text evidence="3 4">Belongs to the cytochrome b family.</text>
</comment>
<comment type="caution">
    <text evidence="2">The full-length protein contains only eight transmembrane helices, not nine as predicted by bioinformatics tools.</text>
</comment>
<gene>
    <name type="primary">MT-CYB</name>
    <name type="synonym">COB</name>
    <name type="synonym">CYTB</name>
    <name type="synonym">MTCYB</name>
</gene>
<proteinExistence type="inferred from homology"/>